<protein>
    <recommendedName>
        <fullName evidence="1">Large ribosomal subunit protein uL13</fullName>
    </recommendedName>
    <alternativeName>
        <fullName evidence="2">50S ribosomal protein L13</fullName>
    </alternativeName>
</protein>
<dbReference type="EMBL" id="AM933173">
    <property type="protein sequence ID" value="CAR39033.1"/>
    <property type="molecule type" value="Genomic_DNA"/>
</dbReference>
<dbReference type="RefSeq" id="WP_000847559.1">
    <property type="nucleotide sequence ID" value="NC_011274.1"/>
</dbReference>
<dbReference type="SMR" id="B5REU3"/>
<dbReference type="GeneID" id="89518067"/>
<dbReference type="KEGG" id="seg:SG3235"/>
<dbReference type="HOGENOM" id="CLU_082184_2_2_6"/>
<dbReference type="Proteomes" id="UP000008321">
    <property type="component" value="Chromosome"/>
</dbReference>
<dbReference type="GO" id="GO:0022625">
    <property type="term" value="C:cytosolic large ribosomal subunit"/>
    <property type="evidence" value="ECO:0007669"/>
    <property type="project" value="TreeGrafter"/>
</dbReference>
<dbReference type="GO" id="GO:0003729">
    <property type="term" value="F:mRNA binding"/>
    <property type="evidence" value="ECO:0007669"/>
    <property type="project" value="TreeGrafter"/>
</dbReference>
<dbReference type="GO" id="GO:0003735">
    <property type="term" value="F:structural constituent of ribosome"/>
    <property type="evidence" value="ECO:0007669"/>
    <property type="project" value="InterPro"/>
</dbReference>
<dbReference type="GO" id="GO:0017148">
    <property type="term" value="P:negative regulation of translation"/>
    <property type="evidence" value="ECO:0007669"/>
    <property type="project" value="TreeGrafter"/>
</dbReference>
<dbReference type="GO" id="GO:0006412">
    <property type="term" value="P:translation"/>
    <property type="evidence" value="ECO:0007669"/>
    <property type="project" value="UniProtKB-UniRule"/>
</dbReference>
<dbReference type="CDD" id="cd00392">
    <property type="entry name" value="Ribosomal_L13"/>
    <property type="match status" value="1"/>
</dbReference>
<dbReference type="FunFam" id="3.90.1180.10:FF:000001">
    <property type="entry name" value="50S ribosomal protein L13"/>
    <property type="match status" value="1"/>
</dbReference>
<dbReference type="Gene3D" id="3.90.1180.10">
    <property type="entry name" value="Ribosomal protein L13"/>
    <property type="match status" value="1"/>
</dbReference>
<dbReference type="HAMAP" id="MF_01366">
    <property type="entry name" value="Ribosomal_uL13"/>
    <property type="match status" value="1"/>
</dbReference>
<dbReference type="InterPro" id="IPR005822">
    <property type="entry name" value="Ribosomal_uL13"/>
</dbReference>
<dbReference type="InterPro" id="IPR005823">
    <property type="entry name" value="Ribosomal_uL13_bac-type"/>
</dbReference>
<dbReference type="InterPro" id="IPR023563">
    <property type="entry name" value="Ribosomal_uL13_CS"/>
</dbReference>
<dbReference type="InterPro" id="IPR036899">
    <property type="entry name" value="Ribosomal_uL13_sf"/>
</dbReference>
<dbReference type="NCBIfam" id="TIGR01066">
    <property type="entry name" value="rplM_bact"/>
    <property type="match status" value="1"/>
</dbReference>
<dbReference type="PANTHER" id="PTHR11545:SF2">
    <property type="entry name" value="LARGE RIBOSOMAL SUBUNIT PROTEIN UL13M"/>
    <property type="match status" value="1"/>
</dbReference>
<dbReference type="PANTHER" id="PTHR11545">
    <property type="entry name" value="RIBOSOMAL PROTEIN L13"/>
    <property type="match status" value="1"/>
</dbReference>
<dbReference type="Pfam" id="PF00572">
    <property type="entry name" value="Ribosomal_L13"/>
    <property type="match status" value="1"/>
</dbReference>
<dbReference type="PIRSF" id="PIRSF002181">
    <property type="entry name" value="Ribosomal_L13"/>
    <property type="match status" value="1"/>
</dbReference>
<dbReference type="SUPFAM" id="SSF52161">
    <property type="entry name" value="Ribosomal protein L13"/>
    <property type="match status" value="1"/>
</dbReference>
<dbReference type="PROSITE" id="PS00783">
    <property type="entry name" value="RIBOSOMAL_L13"/>
    <property type="match status" value="1"/>
</dbReference>
<proteinExistence type="inferred from homology"/>
<reference key="1">
    <citation type="journal article" date="2008" name="Genome Res.">
        <title>Comparative genome analysis of Salmonella enteritidis PT4 and Salmonella gallinarum 287/91 provides insights into evolutionary and host adaptation pathways.</title>
        <authorList>
            <person name="Thomson N.R."/>
            <person name="Clayton D.J."/>
            <person name="Windhorst D."/>
            <person name="Vernikos G."/>
            <person name="Davidson S."/>
            <person name="Churcher C."/>
            <person name="Quail M.A."/>
            <person name="Stevens M."/>
            <person name="Jones M.A."/>
            <person name="Watson M."/>
            <person name="Barron A."/>
            <person name="Layton A."/>
            <person name="Pickard D."/>
            <person name="Kingsley R.A."/>
            <person name="Bignell A."/>
            <person name="Clark L."/>
            <person name="Harris B."/>
            <person name="Ormond D."/>
            <person name="Abdellah Z."/>
            <person name="Brooks K."/>
            <person name="Cherevach I."/>
            <person name="Chillingworth T."/>
            <person name="Woodward J."/>
            <person name="Norberczak H."/>
            <person name="Lord A."/>
            <person name="Arrowsmith C."/>
            <person name="Jagels K."/>
            <person name="Moule S."/>
            <person name="Mungall K."/>
            <person name="Saunders M."/>
            <person name="Whitehead S."/>
            <person name="Chabalgoity J.A."/>
            <person name="Maskell D."/>
            <person name="Humphreys T."/>
            <person name="Roberts M."/>
            <person name="Barrow P.A."/>
            <person name="Dougan G."/>
            <person name="Parkhill J."/>
        </authorList>
    </citation>
    <scope>NUCLEOTIDE SEQUENCE [LARGE SCALE GENOMIC DNA]</scope>
    <source>
        <strain>287/91 / NCTC 13346</strain>
    </source>
</reference>
<keyword id="KW-0687">Ribonucleoprotein</keyword>
<keyword id="KW-0689">Ribosomal protein</keyword>
<name>RL13_SALG2</name>
<feature type="chain" id="PRO_1000144176" description="Large ribosomal subunit protein uL13">
    <location>
        <begin position="1"/>
        <end position="142"/>
    </location>
</feature>
<accession>B5REU3</accession>
<evidence type="ECO:0000255" key="1">
    <source>
        <dbReference type="HAMAP-Rule" id="MF_01366"/>
    </source>
</evidence>
<evidence type="ECO:0000305" key="2"/>
<sequence>MKTFTAKPETVKRDWYVVDATGKTLGRLATELARRLRGKHKAEYTPHVDTGDYIIVLNADKVAVTGNKRTDKVYYHHTGHIGGIKQATFEEMIARRPERVIEIAVKGMLPKGPLGRAMFRKLKVYAGNEHNHAAQQPQVLDI</sequence>
<organism>
    <name type="scientific">Salmonella gallinarum (strain 287/91 / NCTC 13346)</name>
    <dbReference type="NCBI Taxonomy" id="550538"/>
    <lineage>
        <taxon>Bacteria</taxon>
        <taxon>Pseudomonadati</taxon>
        <taxon>Pseudomonadota</taxon>
        <taxon>Gammaproteobacteria</taxon>
        <taxon>Enterobacterales</taxon>
        <taxon>Enterobacteriaceae</taxon>
        <taxon>Salmonella</taxon>
    </lineage>
</organism>
<comment type="function">
    <text evidence="1">This protein is one of the early assembly proteins of the 50S ribosomal subunit, although it is not seen to bind rRNA by itself. It is important during the early stages of 50S assembly.</text>
</comment>
<comment type="subunit">
    <text evidence="1">Part of the 50S ribosomal subunit.</text>
</comment>
<comment type="similarity">
    <text evidence="1">Belongs to the universal ribosomal protein uL13 family.</text>
</comment>
<gene>
    <name evidence="1" type="primary">rplM</name>
    <name type="ordered locus">SG3235</name>
</gene>